<reference key="1">
    <citation type="online journal article" date="1996" name="Plant Gene Register">
        <title>Isolation and characterization of cDNAs encoding the subunit beta of heterotrimeric G proteins from N. tabacum.</title>
        <authorList>
            <person name="Kusnetsov V.V."/>
            <person name="Oelmueller R."/>
        </authorList>
        <locator>PGR96-048</locator>
    </citation>
    <scope>NUCLEOTIDE SEQUENCE [MRNA]</scope>
    <source>
        <strain>cv. Samsun NN</strain>
        <tissue>Leaf</tissue>
    </source>
</reference>
<keyword id="KW-1185">Reference proteome</keyword>
<keyword id="KW-0677">Repeat</keyword>
<keyword id="KW-0807">Transducer</keyword>
<keyword id="KW-0853">WD repeat</keyword>
<evidence type="ECO:0000305" key="1"/>
<name>GBB3_TOBAC</name>
<dbReference type="EMBL" id="X98161">
    <property type="protein sequence ID" value="CAA66842.1"/>
    <property type="molecule type" value="mRNA"/>
</dbReference>
<dbReference type="PIR" id="T03256">
    <property type="entry name" value="T03256"/>
</dbReference>
<dbReference type="SMR" id="Q40507"/>
<dbReference type="STRING" id="4097.Q40507"/>
<dbReference type="PaxDb" id="4097-Q40507"/>
<dbReference type="Proteomes" id="UP000084051">
    <property type="component" value="Unplaced"/>
</dbReference>
<dbReference type="GO" id="GO:0005737">
    <property type="term" value="C:cytoplasm"/>
    <property type="evidence" value="ECO:0000318"/>
    <property type="project" value="GO_Central"/>
</dbReference>
<dbReference type="GO" id="GO:0005834">
    <property type="term" value="C:heterotrimeric G-protein complex"/>
    <property type="evidence" value="ECO:0000318"/>
    <property type="project" value="GO_Central"/>
</dbReference>
<dbReference type="GO" id="GO:0030159">
    <property type="term" value="F:signaling receptor complex adaptor activity"/>
    <property type="evidence" value="ECO:0000318"/>
    <property type="project" value="GO_Central"/>
</dbReference>
<dbReference type="GO" id="GO:0007186">
    <property type="term" value="P:G protein-coupled receptor signaling pathway"/>
    <property type="evidence" value="ECO:0000318"/>
    <property type="project" value="GO_Central"/>
</dbReference>
<dbReference type="CDD" id="cd00200">
    <property type="entry name" value="WD40"/>
    <property type="match status" value="1"/>
</dbReference>
<dbReference type="FunFam" id="2.130.10.10:FF:000580">
    <property type="entry name" value="Guanine nucleotide-binding protein subunit beta"/>
    <property type="match status" value="1"/>
</dbReference>
<dbReference type="Gene3D" id="2.130.10.10">
    <property type="entry name" value="YVTN repeat-like/Quinoprotein amine dehydrogenase"/>
    <property type="match status" value="1"/>
</dbReference>
<dbReference type="InterPro" id="IPR020472">
    <property type="entry name" value="G-protein_beta_WD-40_rep"/>
</dbReference>
<dbReference type="InterPro" id="IPR001632">
    <property type="entry name" value="Gprotein_B"/>
</dbReference>
<dbReference type="InterPro" id="IPR016346">
    <property type="entry name" value="Guanine_nucleotide-bd_bsu"/>
</dbReference>
<dbReference type="InterPro" id="IPR015943">
    <property type="entry name" value="WD40/YVTN_repeat-like_dom_sf"/>
</dbReference>
<dbReference type="InterPro" id="IPR019775">
    <property type="entry name" value="WD40_repeat_CS"/>
</dbReference>
<dbReference type="InterPro" id="IPR036322">
    <property type="entry name" value="WD40_repeat_dom_sf"/>
</dbReference>
<dbReference type="InterPro" id="IPR001680">
    <property type="entry name" value="WD40_rpt"/>
</dbReference>
<dbReference type="PANTHER" id="PTHR19850">
    <property type="entry name" value="GUANINE NUCLEOTIDE-BINDING PROTEIN BETA G PROTEIN BETA"/>
    <property type="match status" value="1"/>
</dbReference>
<dbReference type="Pfam" id="PF25391">
    <property type="entry name" value="WD40_Gbeta"/>
    <property type="match status" value="1"/>
</dbReference>
<dbReference type="PIRSF" id="PIRSF002394">
    <property type="entry name" value="GN-bd_beta"/>
    <property type="match status" value="1"/>
</dbReference>
<dbReference type="PRINTS" id="PR00319">
    <property type="entry name" value="GPROTEINB"/>
</dbReference>
<dbReference type="PRINTS" id="PR00320">
    <property type="entry name" value="GPROTEINBRPT"/>
</dbReference>
<dbReference type="SMART" id="SM00320">
    <property type="entry name" value="WD40"/>
    <property type="match status" value="7"/>
</dbReference>
<dbReference type="SUPFAM" id="SSF50978">
    <property type="entry name" value="WD40 repeat-like"/>
    <property type="match status" value="1"/>
</dbReference>
<dbReference type="PROSITE" id="PS00678">
    <property type="entry name" value="WD_REPEATS_1"/>
    <property type="match status" value="2"/>
</dbReference>
<dbReference type="PROSITE" id="PS50082">
    <property type="entry name" value="WD_REPEATS_2"/>
    <property type="match status" value="5"/>
</dbReference>
<dbReference type="PROSITE" id="PS50294">
    <property type="entry name" value="WD_REPEATS_REGION"/>
    <property type="match status" value="1"/>
</dbReference>
<protein>
    <recommendedName>
        <fullName>Guanine nucleotide-binding protein subunit beta</fullName>
    </recommendedName>
</protein>
<accession>Q40507</accession>
<feature type="chain" id="PRO_0000127729" description="Guanine nucleotide-binding protein subunit beta">
    <location>
        <begin position="1"/>
        <end position="375"/>
    </location>
</feature>
<feature type="repeat" description="WD 1">
    <location>
        <begin position="63"/>
        <end position="93"/>
    </location>
</feature>
<feature type="repeat" description="WD 2">
    <location>
        <begin position="105"/>
        <end position="135"/>
    </location>
</feature>
<feature type="repeat" description="WD 3">
    <location>
        <begin position="154"/>
        <end position="185"/>
    </location>
</feature>
<feature type="repeat" description="WD 4">
    <location>
        <begin position="202"/>
        <end position="233"/>
    </location>
</feature>
<feature type="repeat" description="WD 5">
    <location>
        <begin position="246"/>
        <end position="276"/>
    </location>
</feature>
<feature type="repeat" description="WD 6">
    <location>
        <begin position="293"/>
        <end position="323"/>
    </location>
</feature>
<feature type="repeat" description="WD 7">
    <location>
        <begin position="339"/>
        <end position="369"/>
    </location>
</feature>
<sequence>MSVTELKERHMAATQTVSDLREKLKQKRLQLLDTDVSGYARSQGKTPVTFGPTDLVCCRILQGHTGKVYSLDWTPEKNRIVSASQDGRLIVWNALTSQKTHAIKLPCAWVMTCAFSPSGQSVACGGLDSVCSIYNLNSPIDKDGNHPVSRMLSGHKGYVSSCQYVPDEDTHLITSSGDQTCVLWDITTGLRTSVFGGEFQSGHTADVQSVSISSSNPRLFVSGSCDTTARLWDNRVASRAQRTFYGHEGDVNTVKFFPDGNRFGTGSEDGTCRLFDIRTGHQLQVYYQPHGDGDIPHVTSMAFSISGRLLFVGYSNGDCYVWDTLLAKVVLNLGGVQNSHEGRISCLGLSADGSALCTGSWDTNLKIWAFGGTEV</sequence>
<comment type="function">
    <text>Guanine nucleotide-binding proteins (G proteins) are involved as a modulator or transducer in various transmembrane signaling systems. The beta and gamma chains are required for the GTPase activity, for replacement of GDP by GTP, and for G protein-effector interaction.</text>
</comment>
<comment type="subunit">
    <text>G proteins are composed of 3 units, alpha, beta and gamma.</text>
</comment>
<comment type="similarity">
    <text evidence="1">Belongs to the WD repeat G protein beta family.</text>
</comment>
<proteinExistence type="evidence at transcript level"/>
<organism>
    <name type="scientific">Nicotiana tabacum</name>
    <name type="common">Common tobacco</name>
    <dbReference type="NCBI Taxonomy" id="4097"/>
    <lineage>
        <taxon>Eukaryota</taxon>
        <taxon>Viridiplantae</taxon>
        <taxon>Streptophyta</taxon>
        <taxon>Embryophyta</taxon>
        <taxon>Tracheophyta</taxon>
        <taxon>Spermatophyta</taxon>
        <taxon>Magnoliopsida</taxon>
        <taxon>eudicotyledons</taxon>
        <taxon>Gunneridae</taxon>
        <taxon>Pentapetalae</taxon>
        <taxon>asterids</taxon>
        <taxon>lamiids</taxon>
        <taxon>Solanales</taxon>
        <taxon>Solanaceae</taxon>
        <taxon>Nicotianoideae</taxon>
        <taxon>Nicotianeae</taxon>
        <taxon>Nicotiana</taxon>
    </lineage>
</organism>